<evidence type="ECO:0000255" key="1"/>
<evidence type="ECO:0000255" key="2">
    <source>
        <dbReference type="PROSITE-ProRule" id="PRU00313"/>
    </source>
</evidence>
<evidence type="ECO:0000269" key="3">
    <source>
    </source>
</evidence>
<evidence type="ECO:0000303" key="4">
    <source>
    </source>
</evidence>
<evidence type="ECO:0000305" key="5"/>
<organism>
    <name type="scientific">Homo sapiens</name>
    <name type="common">Human</name>
    <dbReference type="NCBI Taxonomy" id="9606"/>
    <lineage>
        <taxon>Eukaryota</taxon>
        <taxon>Metazoa</taxon>
        <taxon>Chordata</taxon>
        <taxon>Craniata</taxon>
        <taxon>Vertebrata</taxon>
        <taxon>Euteleostomi</taxon>
        <taxon>Mammalia</taxon>
        <taxon>Eutheria</taxon>
        <taxon>Euarchontoglires</taxon>
        <taxon>Primates</taxon>
        <taxon>Haplorrhini</taxon>
        <taxon>Catarrhini</taxon>
        <taxon>Hominidae</taxon>
        <taxon>Homo</taxon>
    </lineage>
</organism>
<feature type="chain" id="PRO_0000285247" description="LEM domain-containing protein 1">
    <location>
        <begin position="1"/>
        <end position="181"/>
    </location>
</feature>
<feature type="transmembrane region" description="Helical; Signal-anchor for type II membrane protein" evidence="1">
    <location>
        <begin position="152"/>
        <end position="172"/>
    </location>
</feature>
<feature type="domain" description="LEM" evidence="2">
    <location>
        <begin position="1"/>
        <end position="45"/>
    </location>
</feature>
<feature type="splice variant" id="VSP_024846" description="In isoform 3." evidence="4">
    <original>PSTRKLYEKKLVQLLVSPPCAPPVMNGPRELDGAQDSDDSEE</original>
    <variation>Q</variation>
    <location>
        <begin position="28"/>
        <end position="69"/>
    </location>
</feature>
<feature type="splice variant" id="VSP_024847" description="In isoform 6." evidence="4">
    <original>PSTRKLYEKKLVQLLVSPPCAPPVMNGPRELDGAQDSDDS</original>
    <variation>RGLQEHQAPESHMGLSPKRETTARKTRLSRAGEKKVSQWA</variation>
    <location>
        <begin position="28"/>
        <end position="67"/>
    </location>
</feature>
<feature type="splice variant" id="VSP_024848" description="In isoform 2." evidence="4">
    <original>PS</original>
    <variation>LA</variation>
    <location>
        <begin position="28"/>
        <end position="29"/>
    </location>
</feature>
<feature type="splice variant" id="VSP_024849" description="In isoform 2." evidence="4">
    <location>
        <begin position="30"/>
        <end position="181"/>
    </location>
</feature>
<feature type="splice variant" id="VSP_024850" description="In isoform 6." evidence="4">
    <location>
        <begin position="68"/>
        <end position="181"/>
    </location>
</feature>
<feature type="splice variant" id="VSP_024851" description="In isoform 5." evidence="4">
    <original>ELNIILQGNIILSTEKSKKLKKWPEASTTKRKAVDTYCLD</original>
    <variation>GGLQEHQAPESHMGLSPKRETTARKTRLSRAGEKKVSQWA</variation>
    <location>
        <begin position="69"/>
        <end position="108"/>
    </location>
</feature>
<feature type="splice variant" id="VSP_024852" description="In isoform 4." evidence="4">
    <original>EL</original>
    <variation>VA</variation>
    <location>
        <begin position="69"/>
        <end position="70"/>
    </location>
</feature>
<feature type="splice variant" id="VSP_024853" description="In isoform 4." evidence="4">
    <location>
        <begin position="71"/>
        <end position="181"/>
    </location>
</feature>
<feature type="splice variant" id="VSP_024854" description="In isoform 5." evidence="4">
    <location>
        <begin position="109"/>
        <end position="181"/>
    </location>
</feature>
<feature type="sequence variant" id="VAR_031999" description="In dbSNP:rs7531012.">
    <original>P</original>
    <variation>S</variation>
    <location>
        <position position="25"/>
    </location>
</feature>
<feature type="sequence conflict" description="In Ref. 2; AAH36636." evidence="5" ref="2">
    <original>E</original>
    <variation>K</variation>
    <location>
        <position position="83"/>
    </location>
</feature>
<protein>
    <recommendedName>
        <fullName>LEM domain-containing protein 1</fullName>
    </recommendedName>
    <alternativeName>
        <fullName>Cancer/testis antigen 50</fullName>
        <shortName>CT50</shortName>
    </alternativeName>
    <alternativeName>
        <fullName>LEM domain protein 1</fullName>
        <shortName>LEMP-1</shortName>
    </alternativeName>
</protein>
<sequence>MVDVKCLSDCKLQNQLEKLGFSPGPILPSTRKLYEKKLVQLLVSPPCAPPVMNGPRELDGAQDSDDSEELNIILQGNIILSTEKSKKLKKWPEASTTKRKAVDTYCLDYKPSKGRRWAARAPSTRITYGTITKERDYCAEDQTIESWREEGFPVGLKLAVLGIFIIVVFVYLTVENKSLFG</sequence>
<name>LEMD1_HUMAN</name>
<gene>
    <name type="primary">LEMD1</name>
</gene>
<proteinExistence type="evidence at protein level"/>
<keyword id="KW-0025">Alternative splicing</keyword>
<keyword id="KW-0472">Membrane</keyword>
<keyword id="KW-1267">Proteomics identification</keyword>
<keyword id="KW-1185">Reference proteome</keyword>
<keyword id="KW-0735">Signal-anchor</keyword>
<keyword id="KW-0812">Transmembrane</keyword>
<keyword id="KW-1133">Transmembrane helix</keyword>
<dbReference type="EMBL" id="AB084764">
    <property type="protein sequence ID" value="BAD20779.1"/>
    <property type="molecule type" value="mRNA"/>
</dbReference>
<dbReference type="EMBL" id="AB084765">
    <property type="protein sequence ID" value="BAD20780.1"/>
    <property type="molecule type" value="mRNA"/>
</dbReference>
<dbReference type="EMBL" id="AB085610">
    <property type="protein sequence ID" value="BAD20781.1"/>
    <property type="molecule type" value="mRNA"/>
</dbReference>
<dbReference type="EMBL" id="AB096677">
    <property type="protein sequence ID" value="BAD20782.1"/>
    <property type="molecule type" value="mRNA"/>
</dbReference>
<dbReference type="EMBL" id="AB096678">
    <property type="protein sequence ID" value="BAD20783.1"/>
    <property type="molecule type" value="mRNA"/>
</dbReference>
<dbReference type="EMBL" id="AB096679">
    <property type="protein sequence ID" value="BAD20784.1"/>
    <property type="molecule type" value="mRNA"/>
</dbReference>
<dbReference type="EMBL" id="AB096680">
    <property type="protein sequence ID" value="BAD20785.1"/>
    <property type="molecule type" value="mRNA"/>
</dbReference>
<dbReference type="EMBL" id="AB096681">
    <property type="protein sequence ID" value="BAD20786.1"/>
    <property type="molecule type" value="mRNA"/>
</dbReference>
<dbReference type="EMBL" id="AB096682">
    <property type="protein sequence ID" value="BAD20787.1"/>
    <property type="molecule type" value="mRNA"/>
</dbReference>
<dbReference type="EMBL" id="BC036636">
    <property type="protein sequence ID" value="AAH36636.1"/>
    <property type="molecule type" value="mRNA"/>
</dbReference>
<dbReference type="CCDS" id="CCDS30986.1">
    <molecule id="Q68G75-5"/>
</dbReference>
<dbReference type="CCDS" id="CCDS55677.1">
    <molecule id="Q68G75-6"/>
</dbReference>
<dbReference type="CCDS" id="CCDS55678.1">
    <molecule id="Q68G75-3"/>
</dbReference>
<dbReference type="CCDS" id="CCDS55679.1">
    <molecule id="Q68G75-1"/>
</dbReference>
<dbReference type="RefSeq" id="NP_001001552.3">
    <molecule id="Q68G75-5"/>
    <property type="nucleotide sequence ID" value="NM_001001552.4"/>
</dbReference>
<dbReference type="RefSeq" id="NP_001185979.1">
    <molecule id="Q68G75-1"/>
    <property type="nucleotide sequence ID" value="NM_001199050.2"/>
</dbReference>
<dbReference type="RefSeq" id="NP_001185980.1">
    <molecule id="Q68G75-3"/>
    <property type="nucleotide sequence ID" value="NM_001199051.2"/>
</dbReference>
<dbReference type="RefSeq" id="NP_001185981.1">
    <molecule id="Q68G75-6"/>
    <property type="nucleotide sequence ID" value="NM_001199052.2"/>
</dbReference>
<dbReference type="RefSeq" id="XP_047290542.1">
    <molecule id="Q68G75-6"/>
    <property type="nucleotide sequence ID" value="XM_047434586.1"/>
</dbReference>
<dbReference type="RefSeq" id="XP_054195632.1">
    <molecule id="Q68G75-6"/>
    <property type="nucleotide sequence ID" value="XM_054339657.1"/>
</dbReference>
<dbReference type="SMR" id="Q68G75"/>
<dbReference type="BioGRID" id="125016">
    <property type="interactions" value="15"/>
</dbReference>
<dbReference type="FunCoup" id="Q68G75">
    <property type="interactions" value="6"/>
</dbReference>
<dbReference type="IntAct" id="Q68G75">
    <property type="interactions" value="14"/>
</dbReference>
<dbReference type="STRING" id="9606.ENSP00000356121"/>
<dbReference type="iPTMnet" id="Q68G75"/>
<dbReference type="PhosphoSitePlus" id="Q68G75"/>
<dbReference type="BioMuta" id="LEMD1"/>
<dbReference type="DMDM" id="146324968"/>
<dbReference type="jPOST" id="Q68G75"/>
<dbReference type="MassIVE" id="Q68G75"/>
<dbReference type="PaxDb" id="9606-ENSP00000356121"/>
<dbReference type="PeptideAtlas" id="Q68G75"/>
<dbReference type="ProteomicsDB" id="66140">
    <molecule id="Q68G75-1"/>
</dbReference>
<dbReference type="ProteomicsDB" id="66141">
    <molecule id="Q68G75-2"/>
</dbReference>
<dbReference type="ProteomicsDB" id="66142">
    <molecule id="Q68G75-3"/>
</dbReference>
<dbReference type="ProteomicsDB" id="66143">
    <molecule id="Q68G75-4"/>
</dbReference>
<dbReference type="ProteomicsDB" id="66144">
    <molecule id="Q68G75-5"/>
</dbReference>
<dbReference type="ProteomicsDB" id="66145">
    <molecule id="Q68G75-6"/>
</dbReference>
<dbReference type="Antibodypedia" id="51435">
    <property type="antibodies" value="30 antibodies from 16 providers"/>
</dbReference>
<dbReference type="DNASU" id="93273"/>
<dbReference type="Ensembl" id="ENST00000367149.6">
    <molecule id="Q68G75-6"/>
    <property type="protein sequence ID" value="ENSP00000356117.3"/>
    <property type="gene ID" value="ENSG00000186007.10"/>
</dbReference>
<dbReference type="Ensembl" id="ENST00000367151.4">
    <molecule id="Q68G75-1"/>
    <property type="protein sequence ID" value="ENSP00000356119.3"/>
    <property type="gene ID" value="ENSG00000186007.10"/>
</dbReference>
<dbReference type="Ensembl" id="ENST00000367152.5">
    <molecule id="Q68G75-3"/>
    <property type="protein sequence ID" value="ENSP00000356120.1"/>
    <property type="gene ID" value="ENSG00000186007.10"/>
</dbReference>
<dbReference type="Ensembl" id="ENST00000367153.9">
    <molecule id="Q68G75-1"/>
    <property type="protein sequence ID" value="ENSP00000356121.4"/>
    <property type="gene ID" value="ENSG00000186007.10"/>
</dbReference>
<dbReference type="Ensembl" id="ENST00000367154.5">
    <molecule id="Q68G75-5"/>
    <property type="protein sequence ID" value="ENSP00000356122.1"/>
    <property type="gene ID" value="ENSG00000186007.10"/>
</dbReference>
<dbReference type="Ensembl" id="ENST00000391936.6">
    <molecule id="Q68G75-5"/>
    <property type="protein sequence ID" value="ENSP00000375801.2"/>
    <property type="gene ID" value="ENSG00000186007.10"/>
</dbReference>
<dbReference type="Ensembl" id="ENST00000495594.2">
    <molecule id="Q68G75-6"/>
    <property type="protein sequence ID" value="ENSP00000479306.1"/>
    <property type="gene ID" value="ENSG00000186007.10"/>
</dbReference>
<dbReference type="GeneID" id="93273"/>
<dbReference type="KEGG" id="hsa:93273"/>
<dbReference type="MANE-Select" id="ENST00000367153.9">
    <property type="protein sequence ID" value="ENSP00000356121.4"/>
    <property type="RefSeq nucleotide sequence ID" value="NM_001199050.2"/>
    <property type="RefSeq protein sequence ID" value="NP_001185979.1"/>
</dbReference>
<dbReference type="UCSC" id="uc001hcj.4">
    <molecule id="Q68G75-1"/>
    <property type="organism name" value="human"/>
</dbReference>
<dbReference type="AGR" id="HGNC:18725"/>
<dbReference type="CTD" id="93273"/>
<dbReference type="DisGeNET" id="93273"/>
<dbReference type="GeneCards" id="LEMD1"/>
<dbReference type="HGNC" id="HGNC:18725">
    <property type="gene designation" value="LEMD1"/>
</dbReference>
<dbReference type="HPA" id="ENSG00000186007">
    <property type="expression patterns" value="Group enriched (epididymis, testis)"/>
</dbReference>
<dbReference type="MIM" id="610480">
    <property type="type" value="gene"/>
</dbReference>
<dbReference type="neXtProt" id="NX_Q68G75"/>
<dbReference type="OpenTargets" id="ENSG00000186007"/>
<dbReference type="PharmGKB" id="PA38660"/>
<dbReference type="VEuPathDB" id="HostDB:ENSG00000186007"/>
<dbReference type="eggNOG" id="ENOG502QWCI">
    <property type="taxonomic scope" value="Eukaryota"/>
</dbReference>
<dbReference type="GeneTree" id="ENSGT00940000154098"/>
<dbReference type="HOGENOM" id="CLU_1577960_0_0_1"/>
<dbReference type="InParanoid" id="Q68G75"/>
<dbReference type="OMA" id="RETDYCP"/>
<dbReference type="OrthoDB" id="6363067at2759"/>
<dbReference type="PAN-GO" id="Q68G75">
    <property type="GO annotations" value="0 GO annotations based on evolutionary models"/>
</dbReference>
<dbReference type="PhylomeDB" id="Q68G75"/>
<dbReference type="TreeFam" id="TF340652"/>
<dbReference type="PathwayCommons" id="Q68G75"/>
<dbReference type="SignaLink" id="Q68G75"/>
<dbReference type="BioGRID-ORCS" id="93273">
    <property type="hits" value="12 hits in 1136 CRISPR screens"/>
</dbReference>
<dbReference type="ChiTaRS" id="LEMD1">
    <property type="organism name" value="human"/>
</dbReference>
<dbReference type="GenomeRNAi" id="93273"/>
<dbReference type="Pharos" id="Q68G75">
    <property type="development level" value="Tbio"/>
</dbReference>
<dbReference type="PRO" id="PR:Q68G75"/>
<dbReference type="Proteomes" id="UP000005640">
    <property type="component" value="Chromosome 1"/>
</dbReference>
<dbReference type="RNAct" id="Q68G75">
    <property type="molecule type" value="protein"/>
</dbReference>
<dbReference type="Bgee" id="ENSG00000186007">
    <property type="expression patterns" value="Expressed in left testis and 117 other cell types or tissues"/>
</dbReference>
<dbReference type="GO" id="GO:0016020">
    <property type="term" value="C:membrane"/>
    <property type="evidence" value="ECO:0007669"/>
    <property type="project" value="UniProtKB-SubCell"/>
</dbReference>
<dbReference type="CDD" id="cd12940">
    <property type="entry name" value="LEM_LAP2_LEMD1"/>
    <property type="match status" value="1"/>
</dbReference>
<dbReference type="FunFam" id="1.10.720.40:FF:000001">
    <property type="entry name" value="LEM domain containing 2, isoform CRA_a"/>
    <property type="match status" value="1"/>
</dbReference>
<dbReference type="Gene3D" id="1.10.720.40">
    <property type="match status" value="1"/>
</dbReference>
<dbReference type="InterPro" id="IPR011015">
    <property type="entry name" value="LEM/LEM-like_dom_sf"/>
</dbReference>
<dbReference type="InterPro" id="IPR003887">
    <property type="entry name" value="LEM_dom"/>
</dbReference>
<dbReference type="InterPro" id="IPR051656">
    <property type="entry name" value="LEM_domain"/>
</dbReference>
<dbReference type="PANTHER" id="PTHR12019">
    <property type="entry name" value="LAMINA-ASSOCIATED POLYPEPTIDE THYMOPOIETIN"/>
    <property type="match status" value="1"/>
</dbReference>
<dbReference type="PANTHER" id="PTHR12019:SF12">
    <property type="entry name" value="LEM DOMAIN-CONTAINING PROTEIN 1"/>
    <property type="match status" value="1"/>
</dbReference>
<dbReference type="Pfam" id="PF03020">
    <property type="entry name" value="LEM"/>
    <property type="match status" value="1"/>
</dbReference>
<dbReference type="SMART" id="SM00540">
    <property type="entry name" value="LEM"/>
    <property type="match status" value="1"/>
</dbReference>
<dbReference type="SUPFAM" id="SSF63451">
    <property type="entry name" value="LEM domain"/>
    <property type="match status" value="1"/>
</dbReference>
<dbReference type="PROSITE" id="PS50954">
    <property type="entry name" value="LEM"/>
    <property type="match status" value="1"/>
</dbReference>
<comment type="interaction">
    <interactant intactId="EBI-12268900">
        <id>Q68G75</id>
    </interactant>
    <interactant intactId="EBI-13059134">
        <id>Q13520</id>
        <label>AQP6</label>
    </interactant>
    <organismsDiffer>false</organismsDiffer>
    <experiments>3</experiments>
</comment>
<comment type="interaction">
    <interactant intactId="EBI-12268900">
        <id>Q68G75</id>
    </interactant>
    <interactant intactId="EBI-3895726">
        <id>P62952</id>
        <label>BLCAP</label>
    </interactant>
    <organismsDiffer>false</organismsDiffer>
    <experiments>3</experiments>
</comment>
<comment type="interaction">
    <interactant intactId="EBI-12268900">
        <id>Q68G75</id>
    </interactant>
    <interactant intactId="EBI-3915253">
        <id>Q15125</id>
        <label>EBP</label>
    </interactant>
    <organismsDiffer>false</organismsDiffer>
    <experiments>3</experiments>
</comment>
<comment type="interaction">
    <interactant intactId="EBI-12268900">
        <id>Q68G75</id>
    </interactant>
    <interactant intactId="EBI-13361852">
        <id>Q96PL5</id>
        <label>ERMAP</label>
    </interactant>
    <organismsDiffer>false</organismsDiffer>
    <experiments>3</experiments>
</comment>
<comment type="interaction">
    <interactant intactId="EBI-12268900">
        <id>Q68G75</id>
    </interactant>
    <interactant intactId="EBI-10266796">
        <id>Q8N5M9</id>
        <label>JAGN1</label>
    </interactant>
    <organismsDiffer>false</organismsDiffer>
    <experiments>3</experiments>
</comment>
<comment type="interaction">
    <interactant intactId="EBI-12268900">
        <id>Q68G75</id>
    </interactant>
    <interactant intactId="EBI-16439278">
        <id>Q6FHY5</id>
        <label>MEOX2</label>
    </interactant>
    <organismsDiffer>false</organismsDiffer>
    <experiments>3</experiments>
</comment>
<comment type="interaction">
    <interactant intactId="EBI-12268900">
        <id>Q68G75</id>
    </interactant>
    <interactant intactId="EBI-724754">
        <id>O14880</id>
        <label>MGST3</label>
    </interactant>
    <organismsDiffer>false</organismsDiffer>
    <experiments>3</experiments>
</comment>
<comment type="interaction">
    <interactant intactId="EBI-12268900">
        <id>Q68G75</id>
    </interactant>
    <interactant intactId="EBI-7545592">
        <id>Q9H6H4</id>
        <label>REEP4</label>
    </interactant>
    <organismsDiffer>false</organismsDiffer>
    <experiments>3</experiments>
</comment>
<comment type="interaction">
    <interactant intactId="EBI-12268900">
        <id>Q68G75</id>
    </interactant>
    <interactant intactId="EBI-10192441">
        <id>Q86VR2</id>
        <label>RETREG3</label>
    </interactant>
    <organismsDiffer>false</organismsDiffer>
    <experiments>3</experiments>
</comment>
<comment type="interaction">
    <interactant intactId="EBI-12268900">
        <id>Q68G75</id>
    </interactant>
    <interactant intactId="EBI-17247926">
        <id>Q9NY72</id>
        <label>SCN3B</label>
    </interactant>
    <organismsDiffer>false</organismsDiffer>
    <experiments>3</experiments>
</comment>
<comment type="interaction">
    <interactant intactId="EBI-12268900">
        <id>Q68G75</id>
    </interactant>
    <interactant intactId="EBI-3921243">
        <id>O60669</id>
        <label>SLC16A7</label>
    </interactant>
    <organismsDiffer>false</organismsDiffer>
    <experiments>3</experiments>
</comment>
<comment type="interaction">
    <interactant intactId="EBI-12268900">
        <id>Q68G75</id>
    </interactant>
    <interactant intactId="EBI-11724433">
        <id>Q6ZT21</id>
        <label>TMPPE</label>
    </interactant>
    <organismsDiffer>false</organismsDiffer>
    <experiments>3</experiments>
</comment>
<comment type="interaction">
    <interactant intactId="EBI-12268900">
        <id>Q68G75</id>
    </interactant>
    <interactant intactId="EBI-12837904">
        <id>Q96MV8</id>
        <label>ZDHHC15</label>
    </interactant>
    <organismsDiffer>false</organismsDiffer>
    <experiments>3</experiments>
</comment>
<comment type="subcellular location">
    <subcellularLocation>
        <location evidence="5">Membrane</location>
        <topology evidence="5">Single-pass membrane protein</topology>
    </subcellularLocation>
</comment>
<comment type="alternative products">
    <event type="alternative splicing"/>
    <isoform>
        <id>Q68G75-1</id>
        <name>1</name>
        <name>LEMD1A</name>
        <sequence type="displayed"/>
    </isoform>
    <isoform>
        <id>Q68G75-2</id>
        <name>2</name>
        <name>LEMD1B</name>
        <sequence type="described" ref="VSP_024848 VSP_024849"/>
    </isoform>
    <isoform>
        <id>Q68G75-3</id>
        <name>3</name>
        <name>LEMD1C</name>
        <sequence type="described" ref="VSP_024846"/>
    </isoform>
    <isoform>
        <id>Q68G75-4</id>
        <name>4</name>
        <name>LEMD1D</name>
        <sequence type="described" ref="VSP_024852 VSP_024853"/>
    </isoform>
    <isoform>
        <id>Q68G75-5</id>
        <name>5</name>
        <name>LEMD1E</name>
        <sequence type="described" ref="VSP_024851 VSP_024854"/>
    </isoform>
    <isoform>
        <id>Q68G75-6</id>
        <name>6</name>
        <name>LEMD1F</name>
        <sequence type="described" ref="VSP_024847 VSP_024850"/>
    </isoform>
</comment>
<comment type="tissue specificity">
    <text evidence="3">Testis-specific. Isoform 6 is detected in 17 of 18 colon cancer tissues examined.</text>
</comment>
<comment type="miscellaneous">
    <molecule>Isoform 6</molecule>
    <text evidence="5">Found at the nuclear membrane.</text>
</comment>
<reference key="1">
    <citation type="journal article" date="2004" name="Oncol. Rep.">
        <title>Isolation of LEM domain-containing 1, a novel testis-specific gene expressed in colorectal cancers.</title>
        <authorList>
            <person name="Yuki D."/>
            <person name="Lin Y.M."/>
            <person name="Fujii Y."/>
            <person name="Nakamura Y."/>
            <person name="Furukawa Y."/>
        </authorList>
    </citation>
    <scope>NUCLEOTIDE SEQUENCE [MRNA] (ISOFORMS 1; 2; 3; 4; 5 AND 6)</scope>
    <scope>TISSUE SPECIFICITY</scope>
    <scope>SUBCELLULAR LOCATION</scope>
    <source>
        <tissue>Testis</tissue>
    </source>
</reference>
<reference key="2">
    <citation type="journal article" date="2004" name="Genome Res.">
        <title>The status, quality, and expansion of the NIH full-length cDNA project: the Mammalian Gene Collection (MGC).</title>
        <authorList>
            <consortium name="The MGC Project Team"/>
        </authorList>
    </citation>
    <scope>NUCLEOTIDE SEQUENCE [LARGE SCALE MRNA] (ISOFORM 1)</scope>
    <source>
        <tissue>Testis</tissue>
    </source>
</reference>
<accession>Q68G75</accession>
<accession>Q6L9T9</accession>
<accession>Q6L9U0</accession>
<accession>Q6L9U1</accession>
<accession>Q6L9U2</accession>
<accession>Q6L9U3</accession>
<accession>Q6L9U4</accession>